<sequence>MGCTPSHSDLVNSVAKSGIQFLKKPKAIRPGCQGGSERGSIPLLVKNSTCYDAGEGLAEEQPSPRRNQTTAKGLCQLMGDPASGKRKDMEGLIPGTKTSSSQLNKSQSHMAKDIPFKTQGSHGSQGADFSGDESEESSTQDTSKWKRTAKCHTSSTQSHCYQTIHPAHEPEGKVDFPEPLVKAHQQAYTYLHSSLSKYEAILCIIHQATQTRELLQPMVSFLLLCFEEISQLLGEISKDGEVLLQEVREDLAWPLKKREPQEQPNLLQQLLQYTVSKLQVLNGTVASLTGSFLEGSSSYLHSTATHLENKLSTKRNVDERLLRALRQLESLASGCGDPGVQGLPLCSEDSGIGADNESVQSVDKLGKQTSWDLAPEPEEWKSVTSPHTEARQSGHTWQQSPFCLGSGRPQDCLLSGAPMAKVQPRAQDEARSPCLSSTSPENITSPPLKLGTSTPCDSFGIGVSVEPHLSKTSRPMDASSLSDSEDSSPEEEEEDKMSSMSLCAWQEKTPHSRPQSSPADRESPFQARTRRLRSLQAQEMILKMKESISERIKFVPVPCGHQDWSEEEEGRTVVPPRPSTVSGSRRAPERQTRSQSESCLQSHVEDPTFQELRRVQRDLSQKLEAFYALGAKGQGQSQEQILQPRAAAVWPNGTCRVSPSNTTSRLKASLTKNFSILPSQDKSILQKCNPHPEDEQGKAGKLPNAIPSGEVSEAAKATDWNVRGCPTRTSVKKLIETFSPTESLRMLGDSKDAGASPCLRNCIMPPRFPKYTGLAPLYPKPQISPASGRESLKMGIGWKPLAPIFPPLPKAEAAKSEELSCEMEGNLEHLPPPPMEVLMDKSFASLESPESSKSTENSPKETQEPGPGEAGPTRRTWASPKLRASVSPLDLLPSKSTASLTKPHSTGPGSGRSSCQPRKPALDLSSPPATSQSPEVKGGTWSQAEKATSLYRQPRKAIAWHHSGPPSGQNRTSESSLARPRQSRERSPPVGRKASPTRTHWVPQADKRRRSLPSSYRPAQPSPSAVQTPPSPPVSPRVLSPPTTKRRTSPPHQPKLPNPPPESAPAQCKVPSPPTQHPEASPPFSIPSPSPPMSPSQEHKETRDSEDSQAVIAKVSGNTHSIFCPATSSLFEAKPPLSTAHPLTPPSLPPEAGGPLGNPAECWKNSSGPWLRADSQRRAALCALNPLPFLRRTASDRQPGGRPQPPTLDPTSTSYESQLGQNSSSEESPKKDTEPGSSPCSPELQGGTRRASPPEFCVLGHGLQPEPRTGHIQDKSQPEAQPQQEEVS</sequence>
<reference key="1">
    <citation type="journal article" date="2005" name="Nature">
        <title>Generation and annotation of the DNA sequences of human chromosomes 2 and 4.</title>
        <authorList>
            <person name="Hillier L.W."/>
            <person name="Graves T.A."/>
            <person name="Fulton R.S."/>
            <person name="Fulton L.A."/>
            <person name="Pepin K.H."/>
            <person name="Minx P."/>
            <person name="Wagner-McPherson C."/>
            <person name="Layman D."/>
            <person name="Wylie K."/>
            <person name="Sekhon M."/>
            <person name="Becker M.C."/>
            <person name="Fewell G.A."/>
            <person name="Delehaunty K.D."/>
            <person name="Miner T.L."/>
            <person name="Nash W.E."/>
            <person name="Kremitzki C."/>
            <person name="Oddy L."/>
            <person name="Du H."/>
            <person name="Sun H."/>
            <person name="Bradshaw-Cordum H."/>
            <person name="Ali J."/>
            <person name="Carter J."/>
            <person name="Cordes M."/>
            <person name="Harris A."/>
            <person name="Isak A."/>
            <person name="van Brunt A."/>
            <person name="Nguyen C."/>
            <person name="Du F."/>
            <person name="Courtney L."/>
            <person name="Kalicki J."/>
            <person name="Ozersky P."/>
            <person name="Abbott S."/>
            <person name="Armstrong J."/>
            <person name="Belter E.A."/>
            <person name="Caruso L."/>
            <person name="Cedroni M."/>
            <person name="Cotton M."/>
            <person name="Davidson T."/>
            <person name="Desai A."/>
            <person name="Elliott G."/>
            <person name="Erb T."/>
            <person name="Fronick C."/>
            <person name="Gaige T."/>
            <person name="Haakenson W."/>
            <person name="Haglund K."/>
            <person name="Holmes A."/>
            <person name="Harkins R."/>
            <person name="Kim K."/>
            <person name="Kruchowski S.S."/>
            <person name="Strong C.M."/>
            <person name="Grewal N."/>
            <person name="Goyea E."/>
            <person name="Hou S."/>
            <person name="Levy A."/>
            <person name="Martinka S."/>
            <person name="Mead K."/>
            <person name="McLellan M.D."/>
            <person name="Meyer R."/>
            <person name="Randall-Maher J."/>
            <person name="Tomlinson C."/>
            <person name="Dauphin-Kohlberg S."/>
            <person name="Kozlowicz-Reilly A."/>
            <person name="Shah N."/>
            <person name="Swearengen-Shahid S."/>
            <person name="Snider J."/>
            <person name="Strong J.T."/>
            <person name="Thompson J."/>
            <person name="Yoakum M."/>
            <person name="Leonard S."/>
            <person name="Pearman C."/>
            <person name="Trani L."/>
            <person name="Radionenko M."/>
            <person name="Waligorski J.E."/>
            <person name="Wang C."/>
            <person name="Rock S.M."/>
            <person name="Tin-Wollam A.-M."/>
            <person name="Maupin R."/>
            <person name="Latreille P."/>
            <person name="Wendl M.C."/>
            <person name="Yang S.-P."/>
            <person name="Pohl C."/>
            <person name="Wallis J.W."/>
            <person name="Spieth J."/>
            <person name="Bieri T.A."/>
            <person name="Berkowicz N."/>
            <person name="Nelson J.O."/>
            <person name="Osborne J."/>
            <person name="Ding L."/>
            <person name="Meyer R."/>
            <person name="Sabo A."/>
            <person name="Shotland Y."/>
            <person name="Sinha P."/>
            <person name="Wohldmann P.E."/>
            <person name="Cook L.L."/>
            <person name="Hickenbotham M.T."/>
            <person name="Eldred J."/>
            <person name="Williams D."/>
            <person name="Jones T.A."/>
            <person name="She X."/>
            <person name="Ciccarelli F.D."/>
            <person name="Izaurralde E."/>
            <person name="Taylor J."/>
            <person name="Schmutz J."/>
            <person name="Myers R.M."/>
            <person name="Cox D.R."/>
            <person name="Huang X."/>
            <person name="McPherson J.D."/>
            <person name="Mardis E.R."/>
            <person name="Clifton S.W."/>
            <person name="Warren W.C."/>
            <person name="Chinwalla A.T."/>
            <person name="Eddy S.R."/>
            <person name="Marra M.A."/>
            <person name="Ovcharenko I."/>
            <person name="Furey T.S."/>
            <person name="Miller W."/>
            <person name="Eichler E.E."/>
            <person name="Bork P."/>
            <person name="Suyama M."/>
            <person name="Torrents D."/>
            <person name="Waterston R.H."/>
            <person name="Wilson R.K."/>
        </authorList>
    </citation>
    <scope>NUCLEOTIDE SEQUENCE [LARGE SCALE GENOMIC DNA]</scope>
</reference>
<reference key="2">
    <citation type="journal article" date="2004" name="Nat. Genet.">
        <title>Complete sequencing and characterization of 21,243 full-length human cDNAs.</title>
        <authorList>
            <person name="Ota T."/>
            <person name="Suzuki Y."/>
            <person name="Nishikawa T."/>
            <person name="Otsuki T."/>
            <person name="Sugiyama T."/>
            <person name="Irie R."/>
            <person name="Wakamatsu A."/>
            <person name="Hayashi K."/>
            <person name="Sato H."/>
            <person name="Nagai K."/>
            <person name="Kimura K."/>
            <person name="Makita H."/>
            <person name="Sekine M."/>
            <person name="Obayashi M."/>
            <person name="Nishi T."/>
            <person name="Shibahara T."/>
            <person name="Tanaka T."/>
            <person name="Ishii S."/>
            <person name="Yamamoto J."/>
            <person name="Saito K."/>
            <person name="Kawai Y."/>
            <person name="Isono Y."/>
            <person name="Nakamura Y."/>
            <person name="Nagahari K."/>
            <person name="Murakami K."/>
            <person name="Yasuda T."/>
            <person name="Iwayanagi T."/>
            <person name="Wagatsuma M."/>
            <person name="Shiratori A."/>
            <person name="Sudo H."/>
            <person name="Hosoiri T."/>
            <person name="Kaku Y."/>
            <person name="Kodaira H."/>
            <person name="Kondo H."/>
            <person name="Sugawara M."/>
            <person name="Takahashi M."/>
            <person name="Kanda K."/>
            <person name="Yokoi T."/>
            <person name="Furuya T."/>
            <person name="Kikkawa E."/>
            <person name="Omura Y."/>
            <person name="Abe K."/>
            <person name="Kamihara K."/>
            <person name="Katsuta N."/>
            <person name="Sato K."/>
            <person name="Tanikawa M."/>
            <person name="Yamazaki M."/>
            <person name="Ninomiya K."/>
            <person name="Ishibashi T."/>
            <person name="Yamashita H."/>
            <person name="Murakawa K."/>
            <person name="Fujimori K."/>
            <person name="Tanai H."/>
            <person name="Kimata M."/>
            <person name="Watanabe M."/>
            <person name="Hiraoka S."/>
            <person name="Chiba Y."/>
            <person name="Ishida S."/>
            <person name="Ono Y."/>
            <person name="Takiguchi S."/>
            <person name="Watanabe S."/>
            <person name="Yosida M."/>
            <person name="Hotuta T."/>
            <person name="Kusano J."/>
            <person name="Kanehori K."/>
            <person name="Takahashi-Fujii A."/>
            <person name="Hara H."/>
            <person name="Tanase T.-O."/>
            <person name="Nomura Y."/>
            <person name="Togiya S."/>
            <person name="Komai F."/>
            <person name="Hara R."/>
            <person name="Takeuchi K."/>
            <person name="Arita M."/>
            <person name="Imose N."/>
            <person name="Musashino K."/>
            <person name="Yuuki H."/>
            <person name="Oshima A."/>
            <person name="Sasaki N."/>
            <person name="Aotsuka S."/>
            <person name="Yoshikawa Y."/>
            <person name="Matsunawa H."/>
            <person name="Ichihara T."/>
            <person name="Shiohata N."/>
            <person name="Sano S."/>
            <person name="Moriya S."/>
            <person name="Momiyama H."/>
            <person name="Satoh N."/>
            <person name="Takami S."/>
            <person name="Terashima Y."/>
            <person name="Suzuki O."/>
            <person name="Nakagawa S."/>
            <person name="Senoh A."/>
            <person name="Mizoguchi H."/>
            <person name="Goto Y."/>
            <person name="Shimizu F."/>
            <person name="Wakebe H."/>
            <person name="Hishigaki H."/>
            <person name="Watanabe T."/>
            <person name="Sugiyama A."/>
            <person name="Takemoto M."/>
            <person name="Kawakami B."/>
            <person name="Yamazaki M."/>
            <person name="Watanabe K."/>
            <person name="Kumagai A."/>
            <person name="Itakura S."/>
            <person name="Fukuzumi Y."/>
            <person name="Fujimori Y."/>
            <person name="Komiyama M."/>
            <person name="Tashiro H."/>
            <person name="Tanigami A."/>
            <person name="Fujiwara T."/>
            <person name="Ono T."/>
            <person name="Yamada K."/>
            <person name="Fujii Y."/>
            <person name="Ozaki K."/>
            <person name="Hirao M."/>
            <person name="Ohmori Y."/>
            <person name="Kawabata A."/>
            <person name="Hikiji T."/>
            <person name="Kobatake N."/>
            <person name="Inagaki H."/>
            <person name="Ikema Y."/>
            <person name="Okamoto S."/>
            <person name="Okitani R."/>
            <person name="Kawakami T."/>
            <person name="Noguchi S."/>
            <person name="Itoh T."/>
            <person name="Shigeta K."/>
            <person name="Senba T."/>
            <person name="Matsumura K."/>
            <person name="Nakajima Y."/>
            <person name="Mizuno T."/>
            <person name="Morinaga M."/>
            <person name="Sasaki M."/>
            <person name="Togashi T."/>
            <person name="Oyama M."/>
            <person name="Hata H."/>
            <person name="Watanabe M."/>
            <person name="Komatsu T."/>
            <person name="Mizushima-Sugano J."/>
            <person name="Satoh T."/>
            <person name="Shirai Y."/>
            <person name="Takahashi Y."/>
            <person name="Nakagawa K."/>
            <person name="Okumura K."/>
            <person name="Nagase T."/>
            <person name="Nomura N."/>
            <person name="Kikuchi H."/>
            <person name="Masuho Y."/>
            <person name="Yamashita R."/>
            <person name="Nakai K."/>
            <person name="Yada T."/>
            <person name="Nakamura Y."/>
            <person name="Ohara O."/>
            <person name="Isogai T."/>
            <person name="Sugano S."/>
        </authorList>
    </citation>
    <scope>NUCLEOTIDE SEQUENCE [LARGE SCALE MRNA] OF 1156-1288</scope>
</reference>
<reference key="3">
    <citation type="journal article" date="2010" name="Am. J. Hum. Genet.">
        <title>Mutations in C2orf71 cause autosomal-recessive retinitis pigmentosa.</title>
        <authorList>
            <person name="Collin R.W.J."/>
            <person name="Safieh C."/>
            <person name="Littink K.W."/>
            <person name="Shalev S.A."/>
            <person name="Garzozi H.J."/>
            <person name="Rizel L."/>
            <person name="Abbasi A.H."/>
            <person name="Cremers F.P.M."/>
            <person name="den Hollander A.I."/>
            <person name="Klevering B.J."/>
            <person name="Ben-Yosef T."/>
        </authorList>
    </citation>
    <scope>INVOLVEMENT IN RP54</scope>
    <scope>VARIANT LEU-867</scope>
    <scope>TISSUE SPECIFICITY</scope>
</reference>
<reference key="4">
    <citation type="journal article" date="2010" name="Am. J. Hum. Genet.">
        <title>Discovery and functional analysis of a retinitis pigmentosa gene, C2orf71.</title>
        <authorList>
            <person name="Nishimura D.Y."/>
            <person name="Baye L.M."/>
            <person name="Perveen R."/>
            <person name="Searby C.C."/>
            <person name="Avila-Fernandez A."/>
            <person name="Pereiro I."/>
            <person name="Ayuso C."/>
            <person name="Valverde D."/>
            <person name="Bishop P.N."/>
            <person name="Manson F.D.C."/>
            <person name="Urquhart J."/>
            <person name="Stone E.M."/>
            <person name="Slusarski D.C."/>
            <person name="Black G.C.M."/>
            <person name="Sheffield V.C."/>
        </authorList>
    </citation>
    <scope>FUNCTION</scope>
    <scope>VARIANT RP54 PHE-201</scope>
    <scope>INVOLVEMENT IN RP54</scope>
    <scope>SUBCELLULAR LOCATION</scope>
</reference>
<reference key="5">
    <citation type="journal article" date="2019" name="Mol. Vis.">
        <title>Novel mutations in c2orf71 causing an early onset form of cone-rod dystrophy: A molecular diagnosis after 20 years of clinical follow-up.</title>
        <authorList>
            <person name="Serra R."/>
            <person name="Floris M."/>
            <person name="Pinna A."/>
            <person name="Boscia F."/>
            <person name="Cucca F."/>
            <person name="Angius A."/>
        </authorList>
    </citation>
    <scope>INVOLVEMENT IN CORD23</scope>
</reference>
<reference key="6">
    <citation type="journal article" date="2011" name="Hum. Mutat.">
        <title>Novel C2orf71 mutations account for approximately 1% of cases in a large French arRP cohort.</title>
        <authorList>
            <person name="Audo I."/>
            <person name="Lancelot M.E."/>
            <person name="Mohand-Said S."/>
            <person name="Antonio A."/>
            <person name="Germain A."/>
            <person name="Sahel J.A."/>
            <person name="Bhattacharya S.S."/>
            <person name="Zeitz C."/>
        </authorList>
    </citation>
    <scope>VARIANTS RP54 CYS-320; ASN-372; PRO-612 AND ASP-615</scope>
    <scope>VARIANTS CYS-13; LYS-227; ALA-247; ASP-252; ILE-258; ASN-312; LYS-378; ARG-421; MET-580; THR-628; PRO-648; TYR-688; VAL-792; LEU-867; SER-954; GLN-955; THR-959; ARG-1020; PRO-1089 DEL; THR-1160; GLN-1177; SER-1225 INS; SER-1247 AND LEU-1254</scope>
</reference>
<reference key="7">
    <citation type="journal article" date="2017" name="Invest. Ophthalmol. Vis. Sci.">
        <title>A novel potentially causative variant of NDUFAF7 revealed by mutation screening in a chinese family with pathologic myopia.</title>
        <authorList>
            <person name="Wang B."/>
            <person name="Liu Y."/>
            <person name="Chen S."/>
            <person name="Wu Y."/>
            <person name="Lin S."/>
            <person name="Duan Y."/>
            <person name="Zheng K."/>
            <person name="Zhang L."/>
            <person name="Gu X."/>
            <person name="Hong W."/>
            <person name="Shao H."/>
            <person name="Zeng X."/>
            <person name="Sun B."/>
            <person name="Duan S."/>
        </authorList>
    </citation>
    <scope>VARIANT ARG-1176</scope>
</reference>
<reference key="8">
    <citation type="journal article" date="2014" name="J. Med. Genet.">
        <title>A homozygous nonsense CEP250 mutation combined with a heterozygous nonsense C2orf71 mutation is associated with atypical Usher syndrome.</title>
        <authorList>
            <person name="Khateb S."/>
            <person name="Zelinger L."/>
            <person name="Mizrahi-Meissonnier L."/>
            <person name="Ayuso C."/>
            <person name="Koenekoop R.K."/>
            <person name="Laxer U."/>
            <person name="Gross M."/>
            <person name="Banin E."/>
            <person name="Sharon D."/>
        </authorList>
    </citation>
    <scope>VARIANT 1097-GLN--SER-1288 DEL</scope>
</reference>
<comment type="function">
    <text evidence="5">Plays an essential role for normal photoreceptor cell maintenance and vision.</text>
</comment>
<comment type="subcellular location">
    <subcellularLocation>
        <location evidence="5">Cell projection</location>
        <location evidence="5">Cilium</location>
        <location evidence="5">Photoreceptor outer segment</location>
    </subcellularLocation>
    <subcellularLocation>
        <location evidence="1">Photoreceptor inner segment</location>
    </subcellularLocation>
</comment>
<comment type="tissue specificity">
    <text evidence="4">Specifically expressed in retina.</text>
</comment>
<comment type="disease" evidence="4 5 6">
    <disease id="DI-02708">
        <name>Retinitis pigmentosa 54</name>
        <acronym>RP54</acronym>
        <description>A retinal dystrophy belonging to the group of pigmentary retinopathies. Retinitis pigmentosa is characterized by retinal pigment deposits visible on fundus examination and primary loss of rod photoreceptor cells followed by secondary loss of cone photoreceptors. Patients typically have night vision blindness and loss of midperipheral visual field. As their condition progresses, they lose their far peripheral visual field and eventually central vision as well.</description>
        <dbReference type="MIM" id="613428"/>
    </disease>
    <text>The disease is caused by variants affecting the gene represented in this entry.</text>
</comment>
<comment type="disease" evidence="9">
    <disease id="DI-06596">
        <name>Cone-rod dystrophy 23</name>
        <acronym>CORD23</acronym>
        <description>An autosomal recessive form of cone-rod dystrophy, an inherited retinal dystrophy characterized by retinal pigment deposits visible on fundus examination, predominantly in the macular region, and initial loss of cone photoreceptors followed by rod degeneration. This leads to decreased visual acuity and sensitivity in the central visual field, followed by loss of peripheral vision. Severe loss of vision occurs earlier than in retinitis pigmentosa, due to cone photoreceptors degenerating at a higher rate than rod photoreceptors.</description>
        <dbReference type="MIM" id="613428"/>
    </disease>
    <text>The disease may be caused by variants affecting the gene represented in this entry.</text>
</comment>
<organism>
    <name type="scientific">Homo sapiens</name>
    <name type="common">Human</name>
    <dbReference type="NCBI Taxonomy" id="9606"/>
    <lineage>
        <taxon>Eukaryota</taxon>
        <taxon>Metazoa</taxon>
        <taxon>Chordata</taxon>
        <taxon>Craniata</taxon>
        <taxon>Vertebrata</taxon>
        <taxon>Euteleostomi</taxon>
        <taxon>Mammalia</taxon>
        <taxon>Eutheria</taxon>
        <taxon>Euarchontoglires</taxon>
        <taxon>Primates</taxon>
        <taxon>Haplorrhini</taxon>
        <taxon>Catarrhini</taxon>
        <taxon>Hominidae</taxon>
        <taxon>Homo</taxon>
    </lineage>
</organism>
<gene>
    <name evidence="10" type="primary">PCARE</name>
    <name type="synonym">C2orf71</name>
</gene>
<accession>A6NGG8</accession>
<keyword id="KW-0002">3D-structure</keyword>
<keyword id="KW-0966">Cell projection</keyword>
<keyword id="KW-1186">Ciliopathy</keyword>
<keyword id="KW-0969">Cilium</keyword>
<keyword id="KW-0182">Cone-rod dystrophy</keyword>
<keyword id="KW-0225">Disease variant</keyword>
<keyword id="KW-0449">Lipoprotein</keyword>
<keyword id="KW-0519">Myristate</keyword>
<keyword id="KW-0564">Palmitate</keyword>
<keyword id="KW-1267">Proteomics identification</keyword>
<keyword id="KW-1185">Reference proteome</keyword>
<keyword id="KW-0682">Retinitis pigmentosa</keyword>
<keyword id="KW-0716">Sensory transduction</keyword>
<keyword id="KW-0844">Vision</keyword>
<dbReference type="EMBL" id="AC105398">
    <property type="status" value="NOT_ANNOTATED_CDS"/>
    <property type="molecule type" value="Genomic_DNA"/>
</dbReference>
<dbReference type="EMBL" id="AK092250">
    <property type="status" value="NOT_ANNOTATED_CDS"/>
    <property type="molecule type" value="mRNA"/>
</dbReference>
<dbReference type="CCDS" id="CCDS42669.1"/>
<dbReference type="RefSeq" id="NP_001025054.1">
    <property type="nucleotide sequence ID" value="NM_001029883.3"/>
</dbReference>
<dbReference type="PDB" id="7LXF">
    <property type="method" value="X-ray"/>
    <property type="resolution" value="1.65 A"/>
    <property type="chains" value="A=813-848"/>
</dbReference>
<dbReference type="PDBsum" id="7LXF"/>
<dbReference type="SMR" id="A6NGG8"/>
<dbReference type="BioGRID" id="132908">
    <property type="interactions" value="9"/>
</dbReference>
<dbReference type="FunCoup" id="A6NGG8">
    <property type="interactions" value="18"/>
</dbReference>
<dbReference type="IntAct" id="A6NGG8">
    <property type="interactions" value="5"/>
</dbReference>
<dbReference type="STRING" id="9606.ENSP00000332809"/>
<dbReference type="iPTMnet" id="A6NGG8"/>
<dbReference type="PhosphoSitePlus" id="A6NGG8"/>
<dbReference type="BioMuta" id="C2orf71"/>
<dbReference type="jPOST" id="A6NGG8"/>
<dbReference type="MassIVE" id="A6NGG8"/>
<dbReference type="PaxDb" id="9606-ENSP00000332809"/>
<dbReference type="PeptideAtlas" id="A6NGG8"/>
<dbReference type="ProteomicsDB" id="1125"/>
<dbReference type="Antibodypedia" id="62851">
    <property type="antibodies" value="32 antibodies from 11 providers"/>
</dbReference>
<dbReference type="DNASU" id="388939"/>
<dbReference type="Ensembl" id="ENST00000331664.6">
    <property type="protein sequence ID" value="ENSP00000332809.4"/>
    <property type="gene ID" value="ENSG00000179270.7"/>
</dbReference>
<dbReference type="GeneID" id="388939"/>
<dbReference type="KEGG" id="hsa:388939"/>
<dbReference type="MANE-Select" id="ENST00000331664.6">
    <property type="protein sequence ID" value="ENSP00000332809.4"/>
    <property type="RefSeq nucleotide sequence ID" value="NM_001029883.3"/>
    <property type="RefSeq protein sequence ID" value="NP_001025054.1"/>
</dbReference>
<dbReference type="UCSC" id="uc002rmt.3">
    <property type="organism name" value="human"/>
</dbReference>
<dbReference type="AGR" id="HGNC:34383"/>
<dbReference type="CTD" id="388939"/>
<dbReference type="DisGeNET" id="388939"/>
<dbReference type="GeneCards" id="PCARE"/>
<dbReference type="GeneReviews" id="PCARE"/>
<dbReference type="HGNC" id="HGNC:34383">
    <property type="gene designation" value="PCARE"/>
</dbReference>
<dbReference type="HPA" id="ENSG00000179270">
    <property type="expression patterns" value="Tissue enriched (retina)"/>
</dbReference>
<dbReference type="MalaCards" id="PCARE"/>
<dbReference type="MIM" id="613425">
    <property type="type" value="gene"/>
</dbReference>
<dbReference type="MIM" id="613428">
    <property type="type" value="phenotype"/>
</dbReference>
<dbReference type="neXtProt" id="NX_A6NGG8"/>
<dbReference type="OpenTargets" id="ENSG00000179270"/>
<dbReference type="Orphanet" id="791">
    <property type="disease" value="Retinitis pigmentosa"/>
</dbReference>
<dbReference type="PharmGKB" id="PA162379508"/>
<dbReference type="VEuPathDB" id="HostDB:ENSG00000179270"/>
<dbReference type="eggNOG" id="ENOG502QUWN">
    <property type="taxonomic scope" value="Eukaryota"/>
</dbReference>
<dbReference type="GeneTree" id="ENSGT00390000002768"/>
<dbReference type="HOGENOM" id="CLU_007417_0_0_1"/>
<dbReference type="InParanoid" id="A6NGG8"/>
<dbReference type="OMA" id="HSIFCPA"/>
<dbReference type="OrthoDB" id="8954214at2759"/>
<dbReference type="PAN-GO" id="A6NGG8">
    <property type="GO annotations" value="4 GO annotations based on evolutionary models"/>
</dbReference>
<dbReference type="PhylomeDB" id="A6NGG8"/>
<dbReference type="TreeFam" id="TF336604"/>
<dbReference type="PathwayCommons" id="A6NGG8"/>
<dbReference type="SignaLink" id="A6NGG8"/>
<dbReference type="BioGRID-ORCS" id="388939">
    <property type="hits" value="12 hits in 1107 CRISPR screens"/>
</dbReference>
<dbReference type="GenomeRNAi" id="388939"/>
<dbReference type="Pharos" id="A6NGG8">
    <property type="development level" value="Tbio"/>
</dbReference>
<dbReference type="PRO" id="PR:A6NGG8"/>
<dbReference type="Proteomes" id="UP000005640">
    <property type="component" value="Chromosome 2"/>
</dbReference>
<dbReference type="RNAct" id="A6NGG8">
    <property type="molecule type" value="protein"/>
</dbReference>
<dbReference type="Bgee" id="ENSG00000179270">
    <property type="expression patterns" value="Expressed in male germ line stem cell (sensu Vertebrata) in testis and 55 other cell types or tissues"/>
</dbReference>
<dbReference type="GO" id="GO:0005929">
    <property type="term" value="C:cilium"/>
    <property type="evidence" value="ECO:0000314"/>
    <property type="project" value="MGI"/>
</dbReference>
<dbReference type="GO" id="GO:0120199">
    <property type="term" value="C:cone photoreceptor outer segment"/>
    <property type="evidence" value="ECO:0007669"/>
    <property type="project" value="Ensembl"/>
</dbReference>
<dbReference type="GO" id="GO:0001917">
    <property type="term" value="C:photoreceptor inner segment"/>
    <property type="evidence" value="ECO:0000318"/>
    <property type="project" value="GO_Central"/>
</dbReference>
<dbReference type="GO" id="GO:0001750">
    <property type="term" value="C:photoreceptor outer segment"/>
    <property type="evidence" value="ECO:0000318"/>
    <property type="project" value="GO_Central"/>
</dbReference>
<dbReference type="GO" id="GO:0035845">
    <property type="term" value="P:photoreceptor cell outer segment organization"/>
    <property type="evidence" value="ECO:0000318"/>
    <property type="project" value="GO_Central"/>
</dbReference>
<dbReference type="GO" id="GO:1903546">
    <property type="term" value="P:protein localization to photoreceptor outer segment"/>
    <property type="evidence" value="ECO:0000318"/>
    <property type="project" value="GO_Central"/>
</dbReference>
<dbReference type="GO" id="GO:0007601">
    <property type="term" value="P:visual perception"/>
    <property type="evidence" value="ECO:0007669"/>
    <property type="project" value="UniProtKB-KW"/>
</dbReference>
<dbReference type="InterPro" id="IPR029352">
    <property type="entry name" value="PCARE"/>
</dbReference>
<dbReference type="PANTHER" id="PTHR22017">
    <property type="entry name" value="PHOTORECEPTOR CILIUM ACTIN REGULATOR"/>
    <property type="match status" value="1"/>
</dbReference>
<dbReference type="PANTHER" id="PTHR22017:SF0">
    <property type="entry name" value="PHOTORECEPTOR CILIUM ACTIN REGULATOR"/>
    <property type="match status" value="1"/>
</dbReference>
<dbReference type="Pfam" id="PF15449">
    <property type="entry name" value="Retinal"/>
    <property type="match status" value="1"/>
</dbReference>
<feature type="initiator methionine" description="Removed" evidence="2">
    <location>
        <position position="1"/>
    </location>
</feature>
<feature type="chain" id="PRO_0000329078" description="Photoreceptor cilium actin regulator">
    <location>
        <begin position="2"/>
        <end position="1288"/>
    </location>
</feature>
<feature type="region of interest" description="Disordered" evidence="3">
    <location>
        <begin position="78"/>
        <end position="147"/>
    </location>
</feature>
<feature type="region of interest" description="Disordered" evidence="3">
    <location>
        <begin position="368"/>
        <end position="401"/>
    </location>
</feature>
<feature type="region of interest" description="Disordered" evidence="3">
    <location>
        <begin position="423"/>
        <end position="453"/>
    </location>
</feature>
<feature type="region of interest" description="Disordered" evidence="3">
    <location>
        <begin position="467"/>
        <end position="527"/>
    </location>
</feature>
<feature type="region of interest" description="Disordered" evidence="3">
    <location>
        <begin position="563"/>
        <end position="605"/>
    </location>
</feature>
<feature type="region of interest" description="Disordered" evidence="3">
    <location>
        <begin position="686"/>
        <end position="707"/>
    </location>
</feature>
<feature type="region of interest" description="Disordered" evidence="3">
    <location>
        <begin position="813"/>
        <end position="1109"/>
    </location>
</feature>
<feature type="region of interest" description="Disordered" evidence="3">
    <location>
        <begin position="1132"/>
        <end position="1169"/>
    </location>
</feature>
<feature type="region of interest" description="Disordered" evidence="3">
    <location>
        <begin position="1190"/>
        <end position="1288"/>
    </location>
</feature>
<feature type="compositionally biased region" description="Polar residues" evidence="3">
    <location>
        <begin position="96"/>
        <end position="109"/>
    </location>
</feature>
<feature type="compositionally biased region" description="Polar residues" evidence="3">
    <location>
        <begin position="382"/>
        <end position="401"/>
    </location>
</feature>
<feature type="compositionally biased region" description="Polar residues" evidence="3">
    <location>
        <begin position="434"/>
        <end position="453"/>
    </location>
</feature>
<feature type="compositionally biased region" description="Acidic residues" evidence="3">
    <location>
        <begin position="483"/>
        <end position="495"/>
    </location>
</feature>
<feature type="compositionally biased region" description="Polar residues" evidence="3">
    <location>
        <begin position="848"/>
        <end position="857"/>
    </location>
</feature>
<feature type="compositionally biased region" description="Polar residues" evidence="3">
    <location>
        <begin position="894"/>
        <end position="904"/>
    </location>
</feature>
<feature type="compositionally biased region" description="Polar residues" evidence="3">
    <location>
        <begin position="927"/>
        <end position="946"/>
    </location>
</feature>
<feature type="compositionally biased region" description="Polar residues" evidence="3">
    <location>
        <begin position="966"/>
        <end position="976"/>
    </location>
</feature>
<feature type="compositionally biased region" description="Low complexity" evidence="3">
    <location>
        <begin position="1018"/>
        <end position="1028"/>
    </location>
</feature>
<feature type="compositionally biased region" description="Pro residues" evidence="3">
    <location>
        <begin position="1051"/>
        <end position="1063"/>
    </location>
</feature>
<feature type="compositionally biased region" description="Pro residues" evidence="3">
    <location>
        <begin position="1071"/>
        <end position="1094"/>
    </location>
</feature>
<feature type="compositionally biased region" description="Basic and acidic residues" evidence="3">
    <location>
        <begin position="1097"/>
        <end position="1106"/>
    </location>
</feature>
<feature type="compositionally biased region" description="Polar residues" evidence="3">
    <location>
        <begin position="1209"/>
        <end position="1226"/>
    </location>
</feature>
<feature type="compositionally biased region" description="Basic and acidic residues" evidence="3">
    <location>
        <begin position="1268"/>
        <end position="1277"/>
    </location>
</feature>
<feature type="compositionally biased region" description="Polar residues" evidence="3">
    <location>
        <begin position="1278"/>
        <end position="1288"/>
    </location>
</feature>
<feature type="lipid moiety-binding region" description="N-myristoyl glycine" evidence="2">
    <location>
        <position position="2"/>
    </location>
</feature>
<feature type="lipid moiety-binding region" description="S-palmitoyl cysteine" evidence="2">
    <location>
        <position position="3"/>
    </location>
</feature>
<feature type="sequence variant" id="VAR_042646" description="In dbSNP:rs10084168." evidence="6">
    <original>S</original>
    <variation>C</variation>
    <location>
        <position position="13"/>
    </location>
</feature>
<feature type="sequence variant" id="VAR_063395" description="In RP54; induces proteasomal degradation; dbSNP:rs267606690." evidence="5">
    <original>I</original>
    <variation>F</variation>
    <location>
        <position position="201"/>
    </location>
</feature>
<feature type="sequence variant" id="VAR_065267" description="In dbSNP:rs114057537." evidence="6">
    <original>E</original>
    <variation>K</variation>
    <location>
        <position position="227"/>
    </location>
</feature>
<feature type="sequence variant" id="VAR_065268" description="In dbSNP:rs77828062." evidence="6">
    <original>V</original>
    <variation>A</variation>
    <location>
        <position position="247"/>
    </location>
</feature>
<feature type="sequence variant" id="VAR_065269" description="In dbSNP:rs77003681." evidence="6">
    <original>A</original>
    <variation>D</variation>
    <location>
        <position position="252"/>
    </location>
</feature>
<feature type="sequence variant" id="VAR_065270" description="In dbSNP:rs116156338." evidence="6">
    <original>R</original>
    <variation>I</variation>
    <location>
        <position position="258"/>
    </location>
</feature>
<feature type="sequence variant" id="VAR_065271" description="In dbSNP:rs1572829341." evidence="6">
    <original>S</original>
    <variation>N</variation>
    <location>
        <position position="312"/>
    </location>
</feature>
<feature type="sequence variant" id="VAR_065272" description="In RP54; uncertain significance; dbSNP:rs374283240." evidence="6">
    <original>R</original>
    <variation>C</variation>
    <location>
        <position position="320"/>
    </location>
</feature>
<feature type="sequence variant" id="VAR_065273" description="In RP54; dbSNP:rs201284350." evidence="6">
    <original>D</original>
    <variation>N</variation>
    <location>
        <position position="372"/>
    </location>
</feature>
<feature type="sequence variant" id="VAR_065274" description="In dbSNP:rs201900716." evidence="6">
    <original>E</original>
    <variation>K</variation>
    <location>
        <position position="378"/>
    </location>
</feature>
<feature type="sequence variant" id="VAR_042647" description="In dbSNP:rs17007544." evidence="6">
    <original>K</original>
    <variation>R</variation>
    <location>
        <position position="421"/>
    </location>
</feature>
<feature type="sequence variant" id="VAR_042648" description="In dbSNP:rs10166913." evidence="6">
    <original>T</original>
    <variation>M</variation>
    <location>
        <position position="580"/>
    </location>
</feature>
<feature type="sequence variant" id="VAR_065275" description="In RP54; dbSNP:rs200758183." evidence="6">
    <original>L</original>
    <variation>P</variation>
    <location>
        <position position="612"/>
    </location>
</feature>
<feature type="sequence variant" id="VAR_065276" description="In RP54; dbSNP:rs140776870." evidence="6">
    <original>V</original>
    <variation>D</variation>
    <location>
        <position position="615"/>
    </location>
</feature>
<feature type="sequence variant" id="VAR_065277" description="In dbSNP:rs571059484." evidence="6">
    <original>A</original>
    <variation>T</variation>
    <location>
        <position position="628"/>
    </location>
</feature>
<feature type="sequence variant" id="VAR_065278" evidence="6">
    <original>A</original>
    <variation>P</variation>
    <location>
        <position position="648"/>
    </location>
</feature>
<feature type="sequence variant" id="VAR_065279" description="In dbSNP:rs149601594." evidence="6">
    <original>C</original>
    <variation>Y</variation>
    <location>
        <position position="688"/>
    </location>
</feature>
<feature type="sequence variant" id="VAR_042649" description="In dbSNP:rs17744093." evidence="6">
    <original>L</original>
    <variation>V</variation>
    <location>
        <position position="792"/>
    </location>
</feature>
<feature type="sequence variant" id="VAR_063396" description="In dbSNP:rs182248363." evidence="4 6">
    <original>P</original>
    <variation>L</variation>
    <location>
        <position position="867"/>
    </location>
</feature>
<feature type="sequence variant" id="VAR_065280" description="In dbSNP:rs758883789." evidence="6">
    <original>P</original>
    <variation>S</variation>
    <location>
        <position position="954"/>
    </location>
</feature>
<feature type="sequence variant" id="VAR_065281" description="In dbSNP:rs184249075." evidence="6">
    <original>R</original>
    <variation>Q</variation>
    <location>
        <position position="955"/>
    </location>
</feature>
<feature type="sequence variant" id="VAR_065282" description="In dbSNP:rs192350796." evidence="6">
    <original>A</original>
    <variation>T</variation>
    <location>
        <position position="959"/>
    </location>
</feature>
<feature type="sequence variant" id="VAR_065283" description="In dbSNP:rs200367963." evidence="6">
    <original>Q</original>
    <variation>R</variation>
    <location>
        <position position="1020"/>
    </location>
</feature>
<feature type="sequence variant" id="VAR_065284" evidence="6">
    <location>
        <position position="1089"/>
    </location>
</feature>
<feature type="sequence variant" id="VAR_081751" description="Found in a family with sensorineural hearing loss and retinal degeneration; likely pathogenic; the retinal involvement is more severe in double homozygotes also carrying a CEP250 truncating variant." evidence="7">
    <location>
        <begin position="1097"/>
        <end position="1288"/>
    </location>
</feature>
<feature type="sequence variant" id="VAR_065285" description="In dbSNP:rs766723736." evidence="6">
    <original>A</original>
    <variation>T</variation>
    <location>
        <position position="1160"/>
    </location>
</feature>
<feature type="sequence variant" id="VAR_079609" description="Found in patients with pathologic myopia; uncertain significance; dbSNP:rs182812191." evidence="8">
    <original>Q</original>
    <variation>R</variation>
    <location>
        <position position="1176"/>
    </location>
</feature>
<feature type="sequence variant" id="VAR_065286" description="In dbSNP:rs375826049." evidence="6">
    <original>R</original>
    <variation>Q</variation>
    <location>
        <position position="1177"/>
    </location>
</feature>
<feature type="sequence variant" id="VAR_065287" evidence="6">
    <original>S</original>
    <variation>SS</variation>
    <location>
        <position position="1225"/>
    </location>
</feature>
<feature type="sequence variant" id="VAR_065288" description="In dbSNP:rs187333111." evidence="6">
    <original>G</original>
    <variation>S</variation>
    <location>
        <position position="1247"/>
    </location>
</feature>
<feature type="sequence variant" id="VAR_042650" description="In dbSNP:rs1975713." evidence="6">
    <original>P</original>
    <variation>L</variation>
    <location>
        <position position="1254"/>
    </location>
</feature>
<feature type="helix" evidence="11">
    <location>
        <begin position="835"/>
        <end position="838"/>
    </location>
</feature>
<feature type="helix" evidence="11">
    <location>
        <begin position="842"/>
        <end position="845"/>
    </location>
</feature>
<protein>
    <recommendedName>
        <fullName evidence="10">Photoreceptor cilium actin regulator</fullName>
    </recommendedName>
</protein>
<name>PCARE_HUMAN</name>
<evidence type="ECO:0000250" key="1">
    <source>
        <dbReference type="UniProtKB" id="Q6PAC4"/>
    </source>
</evidence>
<evidence type="ECO:0000255" key="2"/>
<evidence type="ECO:0000256" key="3">
    <source>
        <dbReference type="SAM" id="MobiDB-lite"/>
    </source>
</evidence>
<evidence type="ECO:0000269" key="4">
    <source>
    </source>
</evidence>
<evidence type="ECO:0000269" key="5">
    <source>
    </source>
</evidence>
<evidence type="ECO:0000269" key="6">
    <source>
    </source>
</evidence>
<evidence type="ECO:0000269" key="7">
    <source>
    </source>
</evidence>
<evidence type="ECO:0000269" key="8">
    <source>
    </source>
</evidence>
<evidence type="ECO:0000269" key="9">
    <source>
    </source>
</evidence>
<evidence type="ECO:0000312" key="10">
    <source>
        <dbReference type="HGNC" id="HGNC:34383"/>
    </source>
</evidence>
<evidence type="ECO:0007829" key="11">
    <source>
        <dbReference type="PDB" id="7LXF"/>
    </source>
</evidence>
<proteinExistence type="evidence at protein level"/>